<sequence length="93" mass="10486">MSRSIKKPPFCAPHVLRLVNKAIAQNKLNSIINIHSRSSVILNKFIGLTFGVYNGKTYVPVKVNDNMIGRKFGEFSPTRRYTGHVGDKKVSRK</sequence>
<keyword id="KW-0687">Ribonucleoprotein</keyword>
<keyword id="KW-0689">Ribosomal protein</keyword>
<keyword id="KW-0694">RNA-binding</keyword>
<keyword id="KW-0699">rRNA-binding</keyword>
<accession>Q5HAS6</accession>
<accession>Q5FD62</accession>
<comment type="function">
    <text evidence="1">Protein S19 forms a complex with S13 that binds strongly to the 16S ribosomal RNA.</text>
</comment>
<comment type="similarity">
    <text evidence="1">Belongs to the universal ribosomal protein uS19 family.</text>
</comment>
<proteinExistence type="inferred from homology"/>
<evidence type="ECO:0000255" key="1">
    <source>
        <dbReference type="HAMAP-Rule" id="MF_00531"/>
    </source>
</evidence>
<evidence type="ECO:0000305" key="2"/>
<organism>
    <name type="scientific">Ehrlichia ruminantium (strain Welgevonden)</name>
    <dbReference type="NCBI Taxonomy" id="254945"/>
    <lineage>
        <taxon>Bacteria</taxon>
        <taxon>Pseudomonadati</taxon>
        <taxon>Pseudomonadota</taxon>
        <taxon>Alphaproteobacteria</taxon>
        <taxon>Rickettsiales</taxon>
        <taxon>Anaplasmataceae</taxon>
        <taxon>Ehrlichia</taxon>
    </lineage>
</organism>
<reference key="1">
    <citation type="journal article" date="2005" name="Proc. Natl. Acad. Sci. U.S.A.">
        <title>The genome of the heartwater agent Ehrlichia ruminantium contains multiple tandem repeats of actively variable copy number.</title>
        <authorList>
            <person name="Collins N.E."/>
            <person name="Liebenberg J."/>
            <person name="de Villiers E.P."/>
            <person name="Brayton K.A."/>
            <person name="Louw E."/>
            <person name="Pretorius A."/>
            <person name="Faber F.E."/>
            <person name="van Heerden H."/>
            <person name="Josemans A."/>
            <person name="van Kleef M."/>
            <person name="Steyn H.C."/>
            <person name="van Strijp M.F."/>
            <person name="Zweygarth E."/>
            <person name="Jongejan F."/>
            <person name="Maillard J.C."/>
            <person name="Berthier D."/>
            <person name="Botha M."/>
            <person name="Joubert F."/>
            <person name="Corton C.H."/>
            <person name="Thomson N.R."/>
            <person name="Allsopp M.T."/>
            <person name="Allsopp B.A."/>
        </authorList>
    </citation>
    <scope>NUCLEOTIDE SEQUENCE [LARGE SCALE GENOMIC DNA]</scope>
    <source>
        <strain>Welgevonden</strain>
    </source>
</reference>
<reference key="2">
    <citation type="journal article" date="2006" name="J. Bacteriol.">
        <title>Comparative genomic analysis of three strains of Ehrlichia ruminantium reveals an active process of genome size plasticity.</title>
        <authorList>
            <person name="Frutos R."/>
            <person name="Viari A."/>
            <person name="Ferraz C."/>
            <person name="Morgat A."/>
            <person name="Eychenie S."/>
            <person name="Kandassamy Y."/>
            <person name="Chantal I."/>
            <person name="Bensaid A."/>
            <person name="Coissac E."/>
            <person name="Vachiery N."/>
            <person name="Demaille J."/>
            <person name="Martinez D."/>
        </authorList>
    </citation>
    <scope>NUCLEOTIDE SEQUENCE [LARGE SCALE GENOMIC DNA]</scope>
    <source>
        <strain>Welgevonden</strain>
    </source>
</reference>
<dbReference type="EMBL" id="CR767821">
    <property type="protein sequence ID" value="CAH58335.1"/>
    <property type="molecule type" value="Genomic_DNA"/>
</dbReference>
<dbReference type="EMBL" id="CR925678">
    <property type="protein sequence ID" value="CAI27128.1"/>
    <property type="molecule type" value="Genomic_DNA"/>
</dbReference>
<dbReference type="RefSeq" id="WP_011155285.1">
    <property type="nucleotide sequence ID" value="NC_005295.2"/>
</dbReference>
<dbReference type="SMR" id="Q5HAS6"/>
<dbReference type="GeneID" id="33058412"/>
<dbReference type="KEGG" id="eru:Erum6030"/>
<dbReference type="KEGG" id="erw:ERWE_CDS_06340"/>
<dbReference type="eggNOG" id="COG0185">
    <property type="taxonomic scope" value="Bacteria"/>
</dbReference>
<dbReference type="HOGENOM" id="CLU_144911_0_1_5"/>
<dbReference type="Proteomes" id="UP000001021">
    <property type="component" value="Chromosome"/>
</dbReference>
<dbReference type="GO" id="GO:0005737">
    <property type="term" value="C:cytoplasm"/>
    <property type="evidence" value="ECO:0007669"/>
    <property type="project" value="UniProtKB-ARBA"/>
</dbReference>
<dbReference type="GO" id="GO:0015935">
    <property type="term" value="C:small ribosomal subunit"/>
    <property type="evidence" value="ECO:0007669"/>
    <property type="project" value="InterPro"/>
</dbReference>
<dbReference type="GO" id="GO:0019843">
    <property type="term" value="F:rRNA binding"/>
    <property type="evidence" value="ECO:0007669"/>
    <property type="project" value="UniProtKB-UniRule"/>
</dbReference>
<dbReference type="GO" id="GO:0003735">
    <property type="term" value="F:structural constituent of ribosome"/>
    <property type="evidence" value="ECO:0007669"/>
    <property type="project" value="InterPro"/>
</dbReference>
<dbReference type="GO" id="GO:0000028">
    <property type="term" value="P:ribosomal small subunit assembly"/>
    <property type="evidence" value="ECO:0007669"/>
    <property type="project" value="TreeGrafter"/>
</dbReference>
<dbReference type="GO" id="GO:0006412">
    <property type="term" value="P:translation"/>
    <property type="evidence" value="ECO:0007669"/>
    <property type="project" value="UniProtKB-UniRule"/>
</dbReference>
<dbReference type="FunFam" id="3.30.860.10:FF:000001">
    <property type="entry name" value="30S ribosomal protein S19"/>
    <property type="match status" value="1"/>
</dbReference>
<dbReference type="Gene3D" id="3.30.860.10">
    <property type="entry name" value="30s Ribosomal Protein S19, Chain A"/>
    <property type="match status" value="1"/>
</dbReference>
<dbReference type="HAMAP" id="MF_00531">
    <property type="entry name" value="Ribosomal_uS19"/>
    <property type="match status" value="1"/>
</dbReference>
<dbReference type="InterPro" id="IPR002222">
    <property type="entry name" value="Ribosomal_uS19"/>
</dbReference>
<dbReference type="InterPro" id="IPR005732">
    <property type="entry name" value="Ribosomal_uS19_bac-type"/>
</dbReference>
<dbReference type="InterPro" id="IPR020934">
    <property type="entry name" value="Ribosomal_uS19_CS"/>
</dbReference>
<dbReference type="InterPro" id="IPR023575">
    <property type="entry name" value="Ribosomal_uS19_SF"/>
</dbReference>
<dbReference type="NCBIfam" id="TIGR01050">
    <property type="entry name" value="rpsS_bact"/>
    <property type="match status" value="1"/>
</dbReference>
<dbReference type="PANTHER" id="PTHR11880">
    <property type="entry name" value="RIBOSOMAL PROTEIN S19P FAMILY MEMBER"/>
    <property type="match status" value="1"/>
</dbReference>
<dbReference type="PANTHER" id="PTHR11880:SF8">
    <property type="entry name" value="SMALL RIBOSOMAL SUBUNIT PROTEIN US19M"/>
    <property type="match status" value="1"/>
</dbReference>
<dbReference type="Pfam" id="PF00203">
    <property type="entry name" value="Ribosomal_S19"/>
    <property type="match status" value="1"/>
</dbReference>
<dbReference type="PIRSF" id="PIRSF002144">
    <property type="entry name" value="Ribosomal_S19"/>
    <property type="match status" value="1"/>
</dbReference>
<dbReference type="PRINTS" id="PR00975">
    <property type="entry name" value="RIBOSOMALS19"/>
</dbReference>
<dbReference type="SUPFAM" id="SSF54570">
    <property type="entry name" value="Ribosomal protein S19"/>
    <property type="match status" value="1"/>
</dbReference>
<dbReference type="PROSITE" id="PS00323">
    <property type="entry name" value="RIBOSOMAL_S19"/>
    <property type="match status" value="1"/>
</dbReference>
<name>RS19_EHRRW</name>
<feature type="chain" id="PRO_0000354291" description="Small ribosomal subunit protein uS19">
    <location>
        <begin position="1"/>
        <end position="93"/>
    </location>
</feature>
<gene>
    <name evidence="1" type="primary">rpsS</name>
    <name type="ordered locus">Erum6030</name>
    <name type="ordered locus">ERWE_CDS_06340</name>
</gene>
<protein>
    <recommendedName>
        <fullName evidence="1">Small ribosomal subunit protein uS19</fullName>
    </recommendedName>
    <alternativeName>
        <fullName evidence="2">30S ribosomal protein S19</fullName>
    </alternativeName>
</protein>